<proteinExistence type="inferred from homology"/>
<reference key="1">
    <citation type="journal article" date="2009" name="Nature">
        <title>Evolution of pathogenicity and sexual reproduction in eight Candida genomes.</title>
        <authorList>
            <person name="Butler G."/>
            <person name="Rasmussen M.D."/>
            <person name="Lin M.F."/>
            <person name="Santos M.A.S."/>
            <person name="Sakthikumar S."/>
            <person name="Munro C.A."/>
            <person name="Rheinbay E."/>
            <person name="Grabherr M."/>
            <person name="Forche A."/>
            <person name="Reedy J.L."/>
            <person name="Agrafioti I."/>
            <person name="Arnaud M.B."/>
            <person name="Bates S."/>
            <person name="Brown A.J.P."/>
            <person name="Brunke S."/>
            <person name="Costanzo M.C."/>
            <person name="Fitzpatrick D.A."/>
            <person name="de Groot P.W.J."/>
            <person name="Harris D."/>
            <person name="Hoyer L.L."/>
            <person name="Hube B."/>
            <person name="Klis F.M."/>
            <person name="Kodira C."/>
            <person name="Lennard N."/>
            <person name="Logue M.E."/>
            <person name="Martin R."/>
            <person name="Neiman A.M."/>
            <person name="Nikolaou E."/>
            <person name="Quail M.A."/>
            <person name="Quinn J."/>
            <person name="Santos M.C."/>
            <person name="Schmitzberger F.F."/>
            <person name="Sherlock G."/>
            <person name="Shah P."/>
            <person name="Silverstein K.A.T."/>
            <person name="Skrzypek M.S."/>
            <person name="Soll D."/>
            <person name="Staggs R."/>
            <person name="Stansfield I."/>
            <person name="Stumpf M.P.H."/>
            <person name="Sudbery P.E."/>
            <person name="Srikantha T."/>
            <person name="Zeng Q."/>
            <person name="Berman J."/>
            <person name="Berriman M."/>
            <person name="Heitman J."/>
            <person name="Gow N.A.R."/>
            <person name="Lorenz M.C."/>
            <person name="Birren B.W."/>
            <person name="Kellis M."/>
            <person name="Cuomo C.A."/>
        </authorList>
    </citation>
    <scope>NUCLEOTIDE SEQUENCE [LARGE SCALE GENOMIC DNA]</scope>
    <source>
        <strain>ATCC 11503 / BCRC 21390 / CBS 2605 / JCM 1781 / NBRC 1676 / NRRL YB-4239</strain>
    </source>
</reference>
<evidence type="ECO:0000250" key="1">
    <source>
        <dbReference type="UniProtKB" id="P09960"/>
    </source>
</evidence>
<evidence type="ECO:0000250" key="2">
    <source>
        <dbReference type="UniProtKB" id="Q10740"/>
    </source>
</evidence>
<evidence type="ECO:0000255" key="3">
    <source>
        <dbReference type="PROSITE-ProRule" id="PRU10095"/>
    </source>
</evidence>
<evidence type="ECO:0000305" key="4"/>
<name>LKHA4_LODEL</name>
<comment type="function">
    <text evidence="2">Aminopeptidase that preferentially cleaves di- and tripeptides. Also has low epoxide hydrolase activity (in vitro). Can hydrolyze the epoxide leukotriene LTA(4) but it forms preferentially 5,6-dihydroxy-7,9,11,14-eicosatetraenoic acid rather than the cytokine leukotriene B(4) as the product compared to the homologous mammalian enzyme (in vitro).</text>
</comment>
<comment type="catalytic activity">
    <reaction evidence="2">
        <text>an epoxide + H2O = an ethanediol</text>
        <dbReference type="Rhea" id="RHEA:19037"/>
        <dbReference type="ChEBI" id="CHEBI:15377"/>
        <dbReference type="ChEBI" id="CHEBI:32955"/>
        <dbReference type="ChEBI" id="CHEBI:140594"/>
        <dbReference type="EC" id="3.3.2.10"/>
    </reaction>
</comment>
<comment type="cofactor">
    <cofactor evidence="2">
        <name>Zn(2+)</name>
        <dbReference type="ChEBI" id="CHEBI:29105"/>
    </cofactor>
    <text evidence="2">Binds 1 zinc ion per subunit.</text>
</comment>
<comment type="subcellular location">
    <subcellularLocation>
        <location evidence="2">Cytoplasm</location>
    </subcellularLocation>
    <subcellularLocation>
        <location evidence="2">Nucleus</location>
    </subcellularLocation>
</comment>
<comment type="similarity">
    <text evidence="4">Belongs to the peptidase M1 family.</text>
</comment>
<comment type="sequence caution" evidence="4">
    <conflict type="erroneous gene model prediction">
        <sequence resource="EMBL-CDS" id="EDK42232"/>
    </conflict>
</comment>
<gene>
    <name type="ORF">LELG_00410</name>
</gene>
<sequence length="648" mass="75111">MEELKAYRPKTSPELDPSTLSNYTCFTVKLTTLHFDIDFEKKIVSGKVKYDLLNKSETDHVDLDTSYLDITKVSIQNESCDNQYKLHSRKEPLGSKLHILIPASTPKNFQLEIEFSTTSKCTALQFLDKEATDGKNHPYLFCQCQAIHARSLFPSFDTPGIKSPYKFSAKSPLKTLLSGLLIKEDNENNTVYFEQPVPIPSYLVSIALGDIARTSIGPRSDVMTEPVNLAKCKWEFERDMENFIQVAEKLIFEYEWQKFDSLVLPASFPYGGMEIPNLCQLTPTLICGDRSLVNVVAHELAHSWSGNLVTNCSWEHFWLNEGWTVYLERRILEALAVIEAKQQGKGDKEAHYYGEQVRQFNAIIGWTDLENDLKSMGDNVDKYSILVQDLKGKKNPDDPDDAFSTVPYEKGFNLLYLIEKIVGKEKFDLFIPAYFREFRFKSLDTFQFIDYLFDFFKEDAVKLDQIEWKKWLYEPGMPPIDPKFDTTLAQACYDLAKKCYQYALSEDDENEFTQFKLVANEINDFSPSQNIVFLDTLIAYEKVAGFSWKQHKKTLNRMATLYHDQYTETLNAEIKFRWFYLQATGEVLDFEVAMGEFLGTIGRMKFVRPGYALLNKVNRELAVRYFQRFENRYHPICKAMVRKDLQLD</sequence>
<accession>A5DSS4</accession>
<dbReference type="EC" id="3.4.11.-"/>
<dbReference type="EC" id="3.3.2.10"/>
<dbReference type="EMBL" id="CH981524">
    <property type="protein sequence ID" value="EDK42232.1"/>
    <property type="status" value="ALT_SEQ"/>
    <property type="molecule type" value="Genomic_DNA"/>
</dbReference>
<dbReference type="RefSeq" id="XP_001527890.1">
    <property type="nucleotide sequence ID" value="XM_001527840.1"/>
</dbReference>
<dbReference type="SMR" id="A5DSS4"/>
<dbReference type="FunCoup" id="A5DSS4">
    <property type="interactions" value="1003"/>
</dbReference>
<dbReference type="STRING" id="379508.A5DSS4"/>
<dbReference type="MEROPS" id="M01.034"/>
<dbReference type="GeneID" id="5235941"/>
<dbReference type="KEGG" id="lel:PVL30_000400"/>
<dbReference type="eggNOG" id="KOG1047">
    <property type="taxonomic scope" value="Eukaryota"/>
</dbReference>
<dbReference type="HOGENOM" id="CLU_014505_1_1_1"/>
<dbReference type="InParanoid" id="A5DSS4"/>
<dbReference type="OrthoDB" id="79562at2759"/>
<dbReference type="Proteomes" id="UP000001996">
    <property type="component" value="Unassembled WGS sequence"/>
</dbReference>
<dbReference type="GO" id="GO:0005829">
    <property type="term" value="C:cytosol"/>
    <property type="evidence" value="ECO:0007669"/>
    <property type="project" value="TreeGrafter"/>
</dbReference>
<dbReference type="GO" id="GO:0005634">
    <property type="term" value="C:nucleus"/>
    <property type="evidence" value="ECO:0007669"/>
    <property type="project" value="UniProtKB-SubCell"/>
</dbReference>
<dbReference type="GO" id="GO:0004177">
    <property type="term" value="F:aminopeptidase activity"/>
    <property type="evidence" value="ECO:0000250"/>
    <property type="project" value="UniProtKB"/>
</dbReference>
<dbReference type="GO" id="GO:0004301">
    <property type="term" value="F:epoxide hydrolase activity"/>
    <property type="evidence" value="ECO:0000250"/>
    <property type="project" value="UniProtKB"/>
</dbReference>
<dbReference type="GO" id="GO:0008237">
    <property type="term" value="F:metallopeptidase activity"/>
    <property type="evidence" value="ECO:0007669"/>
    <property type="project" value="UniProtKB-KW"/>
</dbReference>
<dbReference type="GO" id="GO:0008270">
    <property type="term" value="F:zinc ion binding"/>
    <property type="evidence" value="ECO:0000250"/>
    <property type="project" value="UniProtKB"/>
</dbReference>
<dbReference type="GO" id="GO:0043171">
    <property type="term" value="P:peptide catabolic process"/>
    <property type="evidence" value="ECO:0000250"/>
    <property type="project" value="UniProtKB"/>
</dbReference>
<dbReference type="GO" id="GO:0006508">
    <property type="term" value="P:proteolysis"/>
    <property type="evidence" value="ECO:0007669"/>
    <property type="project" value="UniProtKB-KW"/>
</dbReference>
<dbReference type="CDD" id="cd09599">
    <property type="entry name" value="M1_LTA4H"/>
    <property type="match status" value="1"/>
</dbReference>
<dbReference type="FunFam" id="1.10.390.10:FF:000009">
    <property type="entry name" value="Leukotriene A(4) hydrolase"/>
    <property type="match status" value="1"/>
</dbReference>
<dbReference type="FunFam" id="1.25.40.320:FF:000001">
    <property type="entry name" value="Leukotriene A(4) hydrolase"/>
    <property type="match status" value="1"/>
</dbReference>
<dbReference type="FunFam" id="2.60.40.1730:FF:000004">
    <property type="entry name" value="Leukotriene A(4) hydrolase"/>
    <property type="match status" value="1"/>
</dbReference>
<dbReference type="FunFam" id="3.30.2010.30:FF:000001">
    <property type="entry name" value="Leukotriene A(4) hydrolase"/>
    <property type="match status" value="1"/>
</dbReference>
<dbReference type="Gene3D" id="3.30.2010.30">
    <property type="match status" value="1"/>
</dbReference>
<dbReference type="Gene3D" id="1.10.390.10">
    <property type="entry name" value="Neutral Protease Domain 2"/>
    <property type="match status" value="1"/>
</dbReference>
<dbReference type="Gene3D" id="1.25.40.320">
    <property type="entry name" value="Peptidase M1, leukotriene A4 hydrolase/aminopeptidase C-terminal domain"/>
    <property type="match status" value="1"/>
</dbReference>
<dbReference type="Gene3D" id="2.60.40.1730">
    <property type="entry name" value="tricorn interacting facor f3 domain"/>
    <property type="match status" value="1"/>
</dbReference>
<dbReference type="InterPro" id="IPR045357">
    <property type="entry name" value="Aminopeptidase_N-like_N"/>
</dbReference>
<dbReference type="InterPro" id="IPR042097">
    <property type="entry name" value="Aminopeptidase_N-like_N_sf"/>
</dbReference>
<dbReference type="InterPro" id="IPR016024">
    <property type="entry name" value="ARM-type_fold"/>
</dbReference>
<dbReference type="InterPro" id="IPR012777">
    <property type="entry name" value="LTA4H"/>
</dbReference>
<dbReference type="InterPro" id="IPR049980">
    <property type="entry name" value="LTA4H_cat"/>
</dbReference>
<dbReference type="InterPro" id="IPR038502">
    <property type="entry name" value="M1_LTA-4_hydro/amino_C_sf"/>
</dbReference>
<dbReference type="InterPro" id="IPR034015">
    <property type="entry name" value="M1_LTA4H"/>
</dbReference>
<dbReference type="InterPro" id="IPR001930">
    <property type="entry name" value="Peptidase_M1"/>
</dbReference>
<dbReference type="InterPro" id="IPR015211">
    <property type="entry name" value="Peptidase_M1_C"/>
</dbReference>
<dbReference type="InterPro" id="IPR014782">
    <property type="entry name" value="Peptidase_M1_dom"/>
</dbReference>
<dbReference type="InterPro" id="IPR027268">
    <property type="entry name" value="Peptidase_M4/M1_CTD_sf"/>
</dbReference>
<dbReference type="NCBIfam" id="TIGR02411">
    <property type="entry name" value="leuko_A4_hydro"/>
    <property type="match status" value="1"/>
</dbReference>
<dbReference type="PANTHER" id="PTHR45726">
    <property type="entry name" value="LEUKOTRIENE A-4 HYDROLASE"/>
    <property type="match status" value="1"/>
</dbReference>
<dbReference type="PANTHER" id="PTHR45726:SF3">
    <property type="entry name" value="LEUKOTRIENE A-4 HYDROLASE"/>
    <property type="match status" value="1"/>
</dbReference>
<dbReference type="Pfam" id="PF09127">
    <property type="entry name" value="Leuk-A4-hydro_C"/>
    <property type="match status" value="1"/>
</dbReference>
<dbReference type="Pfam" id="PF01433">
    <property type="entry name" value="Peptidase_M1"/>
    <property type="match status" value="1"/>
</dbReference>
<dbReference type="Pfam" id="PF17900">
    <property type="entry name" value="Peptidase_M1_N"/>
    <property type="match status" value="1"/>
</dbReference>
<dbReference type="PRINTS" id="PR00756">
    <property type="entry name" value="ALADIPTASE"/>
</dbReference>
<dbReference type="SMART" id="SM01263">
    <property type="entry name" value="Leuk-A4-hydro_C"/>
    <property type="match status" value="1"/>
</dbReference>
<dbReference type="SUPFAM" id="SSF48371">
    <property type="entry name" value="ARM repeat"/>
    <property type="match status" value="1"/>
</dbReference>
<dbReference type="SUPFAM" id="SSF63737">
    <property type="entry name" value="Leukotriene A4 hydrolase N-terminal domain"/>
    <property type="match status" value="1"/>
</dbReference>
<dbReference type="SUPFAM" id="SSF55486">
    <property type="entry name" value="Metalloproteases ('zincins'), catalytic domain"/>
    <property type="match status" value="1"/>
</dbReference>
<dbReference type="PROSITE" id="PS00142">
    <property type="entry name" value="ZINC_PROTEASE"/>
    <property type="match status" value="1"/>
</dbReference>
<protein>
    <recommendedName>
        <fullName>Leucine aminopeptidase 2</fullName>
        <ecNumber>3.4.11.-</ecNumber>
    </recommendedName>
    <alternativeName>
        <fullName>Epoxide hydrolase</fullName>
        <ecNumber>3.3.2.10</ecNumber>
    </alternativeName>
    <alternativeName>
        <fullName>Leukotriene A-4 hydrolase homolog</fullName>
        <shortName>LTA-4 hydrolase</shortName>
    </alternativeName>
</protein>
<keyword id="KW-0963">Cytoplasm</keyword>
<keyword id="KW-0378">Hydrolase</keyword>
<keyword id="KW-0479">Metal-binding</keyword>
<keyword id="KW-0482">Metalloprotease</keyword>
<keyword id="KW-0539">Nucleus</keyword>
<keyword id="KW-0645">Protease</keyword>
<keyword id="KW-1185">Reference proteome</keyword>
<keyword id="KW-0862">Zinc</keyword>
<feature type="chain" id="PRO_0000324931" description="Leucine aminopeptidase 2">
    <location>
        <begin position="1"/>
        <end position="648"/>
    </location>
</feature>
<feature type="active site" description="Proton acceptor" evidence="3">
    <location>
        <position position="299"/>
    </location>
</feature>
<feature type="active site" description="Proton donor" evidence="3">
    <location>
        <position position="408"/>
    </location>
</feature>
<feature type="binding site" evidence="1">
    <location>
        <begin position="143"/>
        <end position="145"/>
    </location>
    <ligand>
        <name>a peptide</name>
        <dbReference type="ChEBI" id="CHEBI:60466"/>
    </ligand>
</feature>
<feature type="binding site" evidence="1">
    <location>
        <begin position="269"/>
        <end position="274"/>
    </location>
    <ligand>
        <name>a peptide</name>
        <dbReference type="ChEBI" id="CHEBI:60466"/>
    </ligand>
</feature>
<feature type="binding site" evidence="3">
    <location>
        <position position="298"/>
    </location>
    <ligand>
        <name>Zn(2+)</name>
        <dbReference type="ChEBI" id="CHEBI:29105"/>
        <note>catalytic</note>
    </ligand>
</feature>
<feature type="binding site" evidence="3">
    <location>
        <position position="302"/>
    </location>
    <ligand>
        <name>Zn(2+)</name>
        <dbReference type="ChEBI" id="CHEBI:29105"/>
        <note>catalytic</note>
    </ligand>
</feature>
<feature type="binding site" evidence="3">
    <location>
        <position position="321"/>
    </location>
    <ligand>
        <name>Zn(2+)</name>
        <dbReference type="ChEBI" id="CHEBI:29105"/>
        <note>catalytic</note>
    </ligand>
</feature>
<organism>
    <name type="scientific">Lodderomyces elongisporus (strain ATCC 11503 / CBS 2605 / JCM 1781 / NBRC 1676 / NRRL YB-4239)</name>
    <name type="common">Yeast</name>
    <name type="synonym">Saccharomyces elongisporus</name>
    <dbReference type="NCBI Taxonomy" id="379508"/>
    <lineage>
        <taxon>Eukaryota</taxon>
        <taxon>Fungi</taxon>
        <taxon>Dikarya</taxon>
        <taxon>Ascomycota</taxon>
        <taxon>Saccharomycotina</taxon>
        <taxon>Pichiomycetes</taxon>
        <taxon>Debaryomycetaceae</taxon>
        <taxon>Candida/Lodderomyces clade</taxon>
        <taxon>Lodderomyces</taxon>
    </lineage>
</organism>